<proteinExistence type="inferred from homology"/>
<evidence type="ECO:0000305" key="1"/>
<name>Y711_CHLPN</name>
<accession>Q9Z7J4</accession>
<feature type="chain" id="PRO_0000218419" description="Uncharacterized protein CPn_0711/CP_0035/CPj0711/CpB0738">
    <location>
        <begin position="1"/>
        <end position="82"/>
    </location>
</feature>
<sequence length="82" mass="9422">MFNMENTAKEEKNSQPLLDLEQDMQDHDRAQELKASVQDKVHKLHALLREGSDKESFGQQQSLLAGYVALQKVLGRINRKMI</sequence>
<gene>
    <name type="ordered locus">CPn_0711</name>
    <name type="ordered locus">CP_0035</name>
    <name type="ordered locus">CPj0711</name>
    <name type="ordered locus">CpB0738</name>
</gene>
<dbReference type="EMBL" id="AE001363">
    <property type="protein sequence ID" value="AAD18850.1"/>
    <property type="molecule type" value="Genomic_DNA"/>
</dbReference>
<dbReference type="EMBL" id="AE002161">
    <property type="protein sequence ID" value="AAF37930.1"/>
    <property type="molecule type" value="Genomic_DNA"/>
</dbReference>
<dbReference type="EMBL" id="BA000008">
    <property type="protein sequence ID" value="BAA98918.1"/>
    <property type="molecule type" value="Genomic_DNA"/>
</dbReference>
<dbReference type="EMBL" id="AE009440">
    <property type="protein sequence ID" value="AAP98667.1"/>
    <property type="status" value="ALT_INIT"/>
    <property type="molecule type" value="Genomic_DNA"/>
</dbReference>
<dbReference type="PIR" id="D86579">
    <property type="entry name" value="D86579"/>
</dbReference>
<dbReference type="PIR" id="G72046">
    <property type="entry name" value="G72046"/>
</dbReference>
<dbReference type="RefSeq" id="NP_224907.1">
    <property type="nucleotide sequence ID" value="NC_000922.1"/>
</dbReference>
<dbReference type="RefSeq" id="WP_010883349.1">
    <property type="nucleotide sequence ID" value="NZ_CP173416.1"/>
</dbReference>
<dbReference type="SMR" id="Q9Z7J4"/>
<dbReference type="STRING" id="406984.CPK_ORF00114"/>
<dbReference type="KEGG" id="cpa:CP_0035"/>
<dbReference type="KEGG" id="cpj:CPj0711"/>
<dbReference type="KEGG" id="cpn:CPn_0711"/>
<dbReference type="KEGG" id="cpt:CpB0738"/>
<dbReference type="PATRIC" id="fig|115713.3.peg.785"/>
<dbReference type="HOGENOM" id="CLU_185897_0_0_0"/>
<dbReference type="OrthoDB" id="18174at2"/>
<dbReference type="Proteomes" id="UP000000583">
    <property type="component" value="Chromosome"/>
</dbReference>
<dbReference type="Proteomes" id="UP000000801">
    <property type="component" value="Chromosome"/>
</dbReference>
<dbReference type="InterPro" id="IPR035336">
    <property type="entry name" value="DUF5398"/>
</dbReference>
<dbReference type="Pfam" id="PF17376">
    <property type="entry name" value="DUF5398"/>
    <property type="match status" value="1"/>
</dbReference>
<protein>
    <recommendedName>
        <fullName>Uncharacterized protein CPn_0711/CP_0035/CPj0711/CpB0738</fullName>
    </recommendedName>
</protein>
<organism>
    <name type="scientific">Chlamydia pneumoniae</name>
    <name type="common">Chlamydophila pneumoniae</name>
    <dbReference type="NCBI Taxonomy" id="83558"/>
    <lineage>
        <taxon>Bacteria</taxon>
        <taxon>Pseudomonadati</taxon>
        <taxon>Chlamydiota</taxon>
        <taxon>Chlamydiia</taxon>
        <taxon>Chlamydiales</taxon>
        <taxon>Chlamydiaceae</taxon>
        <taxon>Chlamydia/Chlamydophila group</taxon>
        <taxon>Chlamydia</taxon>
    </lineage>
</organism>
<comment type="similarity">
    <text evidence="1">Belongs to the chlamydial CPn_0711/CT_665/TC_0036 family.</text>
</comment>
<comment type="sequence caution" evidence="1">
    <conflict type="erroneous initiation">
        <sequence resource="EMBL-CDS" id="AAP98667"/>
    </conflict>
</comment>
<reference key="1">
    <citation type="journal article" date="1999" name="Nat. Genet.">
        <title>Comparative genomes of Chlamydia pneumoniae and C. trachomatis.</title>
        <authorList>
            <person name="Kalman S."/>
            <person name="Mitchell W.P."/>
            <person name="Marathe R."/>
            <person name="Lammel C.J."/>
            <person name="Fan J."/>
            <person name="Hyman R.W."/>
            <person name="Olinger L."/>
            <person name="Grimwood J."/>
            <person name="Davis R.W."/>
            <person name="Stephens R.S."/>
        </authorList>
    </citation>
    <scope>NUCLEOTIDE SEQUENCE [LARGE SCALE GENOMIC DNA]</scope>
    <source>
        <strain>CWL029</strain>
    </source>
</reference>
<reference key="2">
    <citation type="journal article" date="2000" name="Nucleic Acids Res.">
        <title>Genome sequences of Chlamydia trachomatis MoPn and Chlamydia pneumoniae AR39.</title>
        <authorList>
            <person name="Read T.D."/>
            <person name="Brunham R.C."/>
            <person name="Shen C."/>
            <person name="Gill S.R."/>
            <person name="Heidelberg J.F."/>
            <person name="White O."/>
            <person name="Hickey E.K."/>
            <person name="Peterson J.D."/>
            <person name="Utterback T.R."/>
            <person name="Berry K.J."/>
            <person name="Bass S."/>
            <person name="Linher K.D."/>
            <person name="Weidman J.F."/>
            <person name="Khouri H.M."/>
            <person name="Craven B."/>
            <person name="Bowman C."/>
            <person name="Dodson R.J."/>
            <person name="Gwinn M.L."/>
            <person name="Nelson W.C."/>
            <person name="DeBoy R.T."/>
            <person name="Kolonay J.F."/>
            <person name="McClarty G."/>
            <person name="Salzberg S.L."/>
            <person name="Eisen J.A."/>
            <person name="Fraser C.M."/>
        </authorList>
    </citation>
    <scope>NUCLEOTIDE SEQUENCE [LARGE SCALE GENOMIC DNA]</scope>
    <source>
        <strain>AR39</strain>
    </source>
</reference>
<reference key="3">
    <citation type="journal article" date="2000" name="Nucleic Acids Res.">
        <title>Comparison of whole genome sequences of Chlamydia pneumoniae J138 from Japan and CWL029 from USA.</title>
        <authorList>
            <person name="Shirai M."/>
            <person name="Hirakawa H."/>
            <person name="Kimoto M."/>
            <person name="Tabuchi M."/>
            <person name="Kishi F."/>
            <person name="Ouchi K."/>
            <person name="Shiba T."/>
            <person name="Ishii K."/>
            <person name="Hattori M."/>
            <person name="Kuhara S."/>
            <person name="Nakazawa T."/>
        </authorList>
    </citation>
    <scope>NUCLEOTIDE SEQUENCE [LARGE SCALE GENOMIC DNA]</scope>
    <source>
        <strain>J138</strain>
    </source>
</reference>
<reference key="4">
    <citation type="submission" date="2002-05" db="EMBL/GenBank/DDBJ databases">
        <title>The genome sequence of Chlamydia pneumoniae TW183 and comparison with other Chlamydia strains based on whole genome sequence analysis.</title>
        <authorList>
            <person name="Geng M.M."/>
            <person name="Schuhmacher A."/>
            <person name="Muehldorfer I."/>
            <person name="Bensch K.W."/>
            <person name="Schaefer K.P."/>
            <person name="Schneider S."/>
            <person name="Pohl T."/>
            <person name="Essig A."/>
            <person name="Marre R."/>
            <person name="Melchers K."/>
        </authorList>
    </citation>
    <scope>NUCLEOTIDE SEQUENCE [LARGE SCALE GENOMIC DNA]</scope>
    <source>
        <strain>TW-183</strain>
    </source>
</reference>